<keyword id="KW-0002">3D-structure</keyword>
<keyword id="KW-0046">Antibiotic resistance</keyword>
<keyword id="KW-0489">Methyltransferase</keyword>
<keyword id="KW-0949">S-adenosyl-L-methionine</keyword>
<keyword id="KW-0808">Transferase</keyword>
<reference key="1">
    <citation type="journal article" date="2001" name="Antimicrob. Agents Chemother.">
        <title>An ATP-binding cassette transporter and two rRNA methyltransferases are involved in resistance to avilamycin in the producer organism Streptomyces viridochromogenes Tu57.</title>
        <authorList>
            <person name="Weitnauer G."/>
            <person name="Gaisser S."/>
            <person name="Trefzer A."/>
            <person name="Stockert S."/>
            <person name="Westrich L."/>
            <person name="Quiros L.M."/>
            <person name="Mendez C."/>
            <person name="Salas J.A."/>
            <person name="Bechthold A."/>
        </authorList>
    </citation>
    <scope>NUCLEOTIDE SEQUENCE [GENOMIC DNA]</scope>
    <scope>FUNCTION</scope>
    <source>
        <strain>Tu57</strain>
    </source>
</reference>
<reference key="2">
    <citation type="journal article" date="2003" name="Mol. Microbiol.">
        <title>The avilamycin resistance determinants AviRa and AviRb methylate 23S rRNA at the guanosine 2535 base and the uridine 2479 ribose.</title>
        <authorList>
            <person name="Treede I."/>
            <person name="Jakobsen L."/>
            <person name="Kirpekar F."/>
            <person name="Vester B."/>
            <person name="Weitnauer G."/>
            <person name="Bechthold A."/>
            <person name="Douthwaite S."/>
        </authorList>
    </citation>
    <scope>FUNCTION</scope>
    <scope>CATALYTIC ACTIVITY</scope>
    <source>
        <strain>Tu57</strain>
    </source>
</reference>
<reference key="3">
    <citation type="journal article" date="2003" name="J. Mol. Biol.">
        <title>Crystal structure of the avilamycin resistance-conferring methyltransferase AviRa from Streptomyces viridochromogenes.</title>
        <authorList>
            <person name="Mosbacher T.G."/>
            <person name="Bechthold A."/>
            <person name="Schulz G.E."/>
        </authorList>
    </citation>
    <scope>X-RAY CRYSTALLOGRAPHY (1.50 ANGSTROMS)</scope>
    <source>
        <strain>Tu57</strain>
    </source>
</reference>
<accession>Q9F5K5</accession>
<protein>
    <recommendedName>
        <fullName>23S rRNA (guanine(2535)-N(1))-methyltransferase</fullName>
        <ecNumber>2.1.1.209</ecNumber>
    </recommendedName>
    <alternativeName>
        <fullName>Avilamycin resistance protein A</fullName>
    </alternativeName>
</protein>
<comment type="function">
    <text evidence="1 2">Specifically methylates the guanine-2535 in 23S ribosomal RNA. Confers resistance to antibiotic avilamycin, an orthosomycin antibiotic.</text>
</comment>
<comment type="catalytic activity">
    <reaction evidence="2">
        <text>guanosine(2535) in 23S rRNA + S-adenosyl-L-methionine = N(1)-methylguanosine(2535) in 23S rRNA + S-adenosyl-L-homocysteine + H(+)</text>
        <dbReference type="Rhea" id="RHEA:43096"/>
        <dbReference type="Rhea" id="RHEA-COMP:10337"/>
        <dbReference type="Rhea" id="RHEA-COMP:10338"/>
        <dbReference type="ChEBI" id="CHEBI:15378"/>
        <dbReference type="ChEBI" id="CHEBI:57856"/>
        <dbReference type="ChEBI" id="CHEBI:59789"/>
        <dbReference type="ChEBI" id="CHEBI:73542"/>
        <dbReference type="ChEBI" id="CHEBI:74269"/>
        <dbReference type="EC" id="2.1.1.209"/>
    </reaction>
</comment>
<sequence length="250" mass="26636">MSAYRHAVERIDSSDLACGVVLHSAPGYPAFPVRLATEIFQRALARLPGDGPVTLWDPCCGSGYLLTVLGLLHRRSLRQVIASDVDPAPLELAAKNLALLSPAGLTARELERREQSERFGKPSYLEAAQAARRLRERLTAEGGALPCAIRTADVFDPRALSAVLAGSAPDVVLTDLPYGERTHWEGQVPAQPVAGLLRSLASALPAHAVIAVTDRSRKIPVAPVKALERLKIGTRSAVLVRAADVLEAGP</sequence>
<gene>
    <name type="primary">aviRa</name>
</gene>
<evidence type="ECO:0000269" key="1">
    <source>
    </source>
</evidence>
<evidence type="ECO:0000269" key="2">
    <source>
    </source>
</evidence>
<evidence type="ECO:0007829" key="3">
    <source>
        <dbReference type="PDB" id="1O9G"/>
    </source>
</evidence>
<evidence type="ECO:0007829" key="4">
    <source>
        <dbReference type="PDB" id="1O9H"/>
    </source>
</evidence>
<proteinExistence type="evidence at protein level"/>
<dbReference type="EC" id="2.1.1.209"/>
<dbReference type="EMBL" id="AF333038">
    <property type="protein sequence ID" value="AAG32067.2"/>
    <property type="molecule type" value="Genomic_DNA"/>
</dbReference>
<dbReference type="PDB" id="1O9G">
    <property type="method" value="X-ray"/>
    <property type="resolution" value="1.50 A"/>
    <property type="chains" value="A=1-250"/>
</dbReference>
<dbReference type="PDB" id="1O9H">
    <property type="method" value="X-ray"/>
    <property type="resolution" value="2.40 A"/>
    <property type="chains" value="A=1-250"/>
</dbReference>
<dbReference type="PDBsum" id="1O9G"/>
<dbReference type="PDBsum" id="1O9H"/>
<dbReference type="SMR" id="Q9F5K5"/>
<dbReference type="KEGG" id="ag:AAG32067"/>
<dbReference type="BioCyc" id="MetaCyc:MONOMER-16329"/>
<dbReference type="BRENDA" id="2.1.1.209">
    <property type="organism ID" value="6116"/>
</dbReference>
<dbReference type="EvolutionaryTrace" id="Q9F5K5"/>
<dbReference type="GO" id="GO:0008989">
    <property type="term" value="F:rRNA (guanine-N1-)-methyltransferase activity"/>
    <property type="evidence" value="ECO:0000314"/>
    <property type="project" value="UniProtKB"/>
</dbReference>
<dbReference type="GO" id="GO:0032259">
    <property type="term" value="P:methylation"/>
    <property type="evidence" value="ECO:0000314"/>
    <property type="project" value="UniProtKB"/>
</dbReference>
<dbReference type="GO" id="GO:0046677">
    <property type="term" value="P:response to antibiotic"/>
    <property type="evidence" value="ECO:0000314"/>
    <property type="project" value="UniProtKB"/>
</dbReference>
<dbReference type="GO" id="GO:0031167">
    <property type="term" value="P:rRNA methylation"/>
    <property type="evidence" value="ECO:0000314"/>
    <property type="project" value="UniProtKB"/>
</dbReference>
<dbReference type="Gene3D" id="1.10.287.540">
    <property type="entry name" value="Helix hairpin bin"/>
    <property type="match status" value="1"/>
</dbReference>
<dbReference type="Gene3D" id="3.40.50.150">
    <property type="entry name" value="Vaccinia Virus protein VP39"/>
    <property type="match status" value="1"/>
</dbReference>
<dbReference type="InterPro" id="IPR024268">
    <property type="entry name" value="AviRa"/>
</dbReference>
<dbReference type="InterPro" id="IPR029063">
    <property type="entry name" value="SAM-dependent_MTases_sf"/>
</dbReference>
<dbReference type="Pfam" id="PF11599">
    <property type="entry name" value="AviRa"/>
    <property type="match status" value="1"/>
</dbReference>
<dbReference type="SUPFAM" id="SSF53335">
    <property type="entry name" value="S-adenosyl-L-methionine-dependent methyltransferases"/>
    <property type="match status" value="1"/>
</dbReference>
<name>AVRA_STRVR</name>
<feature type="chain" id="PRO_0000418460" description="23S rRNA (guanine(2535)-N(1))-methyltransferase">
    <location>
        <begin position="1"/>
        <end position="250"/>
    </location>
</feature>
<feature type="strand" evidence="3">
    <location>
        <begin position="5"/>
        <end position="7"/>
    </location>
</feature>
<feature type="helix" evidence="3">
    <location>
        <begin position="14"/>
        <end position="16"/>
    </location>
</feature>
<feature type="turn" evidence="3">
    <location>
        <begin position="18"/>
        <end position="20"/>
    </location>
</feature>
<feature type="helix" evidence="3">
    <location>
        <begin position="33"/>
        <end position="45"/>
    </location>
</feature>
<feature type="strand" evidence="4">
    <location>
        <begin position="47"/>
        <end position="49"/>
    </location>
</feature>
<feature type="strand" evidence="3">
    <location>
        <begin position="53"/>
        <end position="57"/>
    </location>
</feature>
<feature type="helix" evidence="3">
    <location>
        <begin position="64"/>
        <end position="72"/>
    </location>
</feature>
<feature type="helix" evidence="3">
    <location>
        <begin position="74"/>
        <end position="76"/>
    </location>
</feature>
<feature type="strand" evidence="3">
    <location>
        <begin position="77"/>
        <end position="85"/>
    </location>
</feature>
<feature type="helix" evidence="3">
    <location>
        <begin position="87"/>
        <end position="98"/>
    </location>
</feature>
<feature type="helix" evidence="3">
    <location>
        <begin position="102"/>
        <end position="119"/>
    </location>
</feature>
<feature type="helix" evidence="3">
    <location>
        <begin position="122"/>
        <end position="140"/>
    </location>
</feature>
<feature type="strand" evidence="3">
    <location>
        <begin position="147"/>
        <end position="151"/>
    </location>
</feature>
<feature type="helix" evidence="3">
    <location>
        <begin position="157"/>
        <end position="159"/>
    </location>
</feature>
<feature type="helix" evidence="3">
    <location>
        <begin position="160"/>
        <end position="164"/>
    </location>
</feature>
<feature type="strand" evidence="3">
    <location>
        <begin position="170"/>
        <end position="175"/>
    </location>
</feature>
<feature type="helix" evidence="3">
    <location>
        <begin position="178"/>
        <end position="180"/>
    </location>
</feature>
<feature type="strand" evidence="3">
    <location>
        <begin position="181"/>
        <end position="186"/>
    </location>
</feature>
<feature type="helix" evidence="3">
    <location>
        <begin position="190"/>
        <end position="203"/>
    </location>
</feature>
<feature type="strand" evidence="3">
    <location>
        <begin position="209"/>
        <end position="217"/>
    </location>
</feature>
<feature type="strand" evidence="3">
    <location>
        <begin position="227"/>
        <end position="232"/>
    </location>
</feature>
<feature type="strand" evidence="3">
    <location>
        <begin position="235"/>
        <end position="241"/>
    </location>
</feature>
<feature type="helix" evidence="3">
    <location>
        <begin position="242"/>
        <end position="247"/>
    </location>
</feature>
<organism>
    <name type="scientific">Streptomyces viridochromogenes</name>
    <dbReference type="NCBI Taxonomy" id="1938"/>
    <lineage>
        <taxon>Bacteria</taxon>
        <taxon>Bacillati</taxon>
        <taxon>Actinomycetota</taxon>
        <taxon>Actinomycetes</taxon>
        <taxon>Kitasatosporales</taxon>
        <taxon>Streptomycetaceae</taxon>
        <taxon>Streptomyces</taxon>
    </lineage>
</organism>